<dbReference type="EMBL" id="CP017625">
    <property type="protein sequence ID" value="AOW28279.1"/>
    <property type="molecule type" value="Genomic_DNA"/>
</dbReference>
<dbReference type="RefSeq" id="XP_719931.1">
    <property type="nucleotide sequence ID" value="XM_714838.1"/>
</dbReference>
<dbReference type="SMR" id="Q5AEN6"/>
<dbReference type="BioGRID" id="1221377">
    <property type="interactions" value="179"/>
</dbReference>
<dbReference type="FunCoup" id="Q5AEN6">
    <property type="interactions" value="773"/>
</dbReference>
<dbReference type="STRING" id="237561.Q5AEN6"/>
<dbReference type="EnsemblFungi" id="C3_02440C_A-T">
    <property type="protein sequence ID" value="C3_02440C_A-T-p1"/>
    <property type="gene ID" value="C3_02440C_A"/>
</dbReference>
<dbReference type="GeneID" id="3638344"/>
<dbReference type="KEGG" id="cal:CAALFM_C302440CA"/>
<dbReference type="CGD" id="CAL0000180608">
    <property type="gene designation" value="MED7"/>
</dbReference>
<dbReference type="VEuPathDB" id="FungiDB:C3_02440C_A"/>
<dbReference type="eggNOG" id="KOG0570">
    <property type="taxonomic scope" value="Eukaryota"/>
</dbReference>
<dbReference type="HOGENOM" id="CLU_1906467_0_0_1"/>
<dbReference type="InParanoid" id="Q5AEN6"/>
<dbReference type="OrthoDB" id="10253553at2759"/>
<dbReference type="PRO" id="PR:Q5AEN6"/>
<dbReference type="Proteomes" id="UP000000559">
    <property type="component" value="Chromosome 3"/>
</dbReference>
<dbReference type="GO" id="GO:0070847">
    <property type="term" value="C:core mediator complex"/>
    <property type="evidence" value="ECO:0000318"/>
    <property type="project" value="GO_Central"/>
</dbReference>
<dbReference type="GO" id="GO:0016592">
    <property type="term" value="C:mediator complex"/>
    <property type="evidence" value="ECO:0000318"/>
    <property type="project" value="GO_Central"/>
</dbReference>
<dbReference type="GO" id="GO:0003713">
    <property type="term" value="F:transcription coactivator activity"/>
    <property type="evidence" value="ECO:0007669"/>
    <property type="project" value="EnsemblFungi"/>
</dbReference>
<dbReference type="GO" id="GO:0000122">
    <property type="term" value="P:negative regulation of transcription by RNA polymerase II"/>
    <property type="evidence" value="ECO:0007669"/>
    <property type="project" value="EnsemblFungi"/>
</dbReference>
<dbReference type="GO" id="GO:0032968">
    <property type="term" value="P:positive regulation of transcription elongation by RNA polymerase II"/>
    <property type="evidence" value="ECO:0007669"/>
    <property type="project" value="EnsemblFungi"/>
</dbReference>
<dbReference type="GO" id="GO:0060261">
    <property type="term" value="P:positive regulation of transcription initiation by RNA polymerase II"/>
    <property type="evidence" value="ECO:0007669"/>
    <property type="project" value="EnsemblFungi"/>
</dbReference>
<dbReference type="GO" id="GO:0006357">
    <property type="term" value="P:regulation of transcription by RNA polymerase II"/>
    <property type="evidence" value="ECO:0000318"/>
    <property type="project" value="GO_Central"/>
</dbReference>
<dbReference type="GO" id="GO:0051123">
    <property type="term" value="P:RNA polymerase II preinitiation complex assembly"/>
    <property type="evidence" value="ECO:0007669"/>
    <property type="project" value="EnsemblFungi"/>
</dbReference>
<dbReference type="Gene3D" id="6.10.140.1520">
    <property type="match status" value="1"/>
</dbReference>
<dbReference type="Gene3D" id="6.10.140.200">
    <property type="match status" value="1"/>
</dbReference>
<dbReference type="InterPro" id="IPR037212">
    <property type="entry name" value="Med7/Med21-like"/>
</dbReference>
<dbReference type="InterPro" id="IPR009244">
    <property type="entry name" value="Mediatior_Med7"/>
</dbReference>
<dbReference type="InterPro" id="IPR044888">
    <property type="entry name" value="Mediatior_Med7_sf"/>
</dbReference>
<dbReference type="PANTHER" id="PTHR21428">
    <property type="entry name" value="MEDIATOR OF RNA POLYMERASE II TRANSCRIPTION SUBUNIT 7"/>
    <property type="match status" value="1"/>
</dbReference>
<dbReference type="PANTHER" id="PTHR21428:SF11">
    <property type="entry name" value="MEDIATOR OF RNA POLYMERASE II TRANSCRIPTION SUBUNIT 7"/>
    <property type="match status" value="1"/>
</dbReference>
<dbReference type="Pfam" id="PF05983">
    <property type="entry name" value="Med7"/>
    <property type="match status" value="1"/>
</dbReference>
<dbReference type="SUPFAM" id="SSF140718">
    <property type="entry name" value="Mediator hinge subcomplex-like"/>
    <property type="match status" value="1"/>
</dbReference>
<sequence length="304" mass="34508">MSTNNTTTNNEDLISSLYPPPPPYYKFFTKDNLQKLSTWQENNQTTTVSSEVKLEEENTDPDSNNSEENSIPPGELRFLIPPKQPEGPQYRGYGNIWLFEDKLPNLKDSQWEQLYNTSTSTFTSTSTSTANTNIITNTDTDINGNQEVDAGDSTGDENLTSETKIKELHKLMDSLLLNFLELIGILSIDPIKYDKKIHDINLILININHLLNTYRPHQSRESLIMLLKNQIDYKFLEIDQINKKCLDIKSKIKNLINERITVVSDGTTTNTTTTTKTTGLGDGDSIDEKEQLKQDIINRLLSSI</sequence>
<name>MED7_CANAL</name>
<protein>
    <recommendedName>
        <fullName>Mediator of RNA polymerase II transcription subunit 7</fullName>
    </recommendedName>
    <alternativeName>
        <fullName>Mediator complex subunit 7</fullName>
    </alternativeName>
</protein>
<accession>Q5AEN6</accession>
<accession>A0A1D8PJG5</accession>
<accession>Q5AF23</accession>
<proteinExistence type="inferred from homology"/>
<keyword id="KW-0010">Activator</keyword>
<keyword id="KW-0539">Nucleus</keyword>
<keyword id="KW-1185">Reference proteome</keyword>
<keyword id="KW-0804">Transcription</keyword>
<keyword id="KW-0805">Transcription regulation</keyword>
<reference key="1">
    <citation type="journal article" date="2004" name="Proc. Natl. Acad. Sci. U.S.A.">
        <title>The diploid genome sequence of Candida albicans.</title>
        <authorList>
            <person name="Jones T."/>
            <person name="Federspiel N.A."/>
            <person name="Chibana H."/>
            <person name="Dungan J."/>
            <person name="Kalman S."/>
            <person name="Magee B.B."/>
            <person name="Newport G."/>
            <person name="Thorstenson Y.R."/>
            <person name="Agabian N."/>
            <person name="Magee P.T."/>
            <person name="Davis R.W."/>
            <person name="Scherer S."/>
        </authorList>
    </citation>
    <scope>NUCLEOTIDE SEQUENCE [LARGE SCALE GENOMIC DNA]</scope>
    <source>
        <strain>SC5314 / ATCC MYA-2876</strain>
    </source>
</reference>
<reference key="2">
    <citation type="journal article" date="2007" name="Genome Biol.">
        <title>Assembly of the Candida albicans genome into sixteen supercontigs aligned on the eight chromosomes.</title>
        <authorList>
            <person name="van het Hoog M."/>
            <person name="Rast T.J."/>
            <person name="Martchenko M."/>
            <person name="Grindle S."/>
            <person name="Dignard D."/>
            <person name="Hogues H."/>
            <person name="Cuomo C."/>
            <person name="Berriman M."/>
            <person name="Scherer S."/>
            <person name="Magee B.B."/>
            <person name="Whiteway M."/>
            <person name="Chibana H."/>
            <person name="Nantel A."/>
            <person name="Magee P.T."/>
        </authorList>
    </citation>
    <scope>GENOME REANNOTATION</scope>
    <source>
        <strain>SC5314 / ATCC MYA-2876</strain>
    </source>
</reference>
<reference key="3">
    <citation type="journal article" date="2013" name="Genome Biol.">
        <title>Assembly of a phased diploid Candida albicans genome facilitates allele-specific measurements and provides a simple model for repeat and indel structure.</title>
        <authorList>
            <person name="Muzzey D."/>
            <person name="Schwartz K."/>
            <person name="Weissman J.S."/>
            <person name="Sherlock G."/>
        </authorList>
    </citation>
    <scope>NUCLEOTIDE SEQUENCE [LARGE SCALE GENOMIC DNA]</scope>
    <scope>GENOME REANNOTATION</scope>
    <source>
        <strain>SC5314 / ATCC MYA-2876</strain>
    </source>
</reference>
<feature type="chain" id="PRO_0000303196" description="Mediator of RNA polymerase II transcription subunit 7">
    <location>
        <begin position="1"/>
        <end position="304"/>
    </location>
</feature>
<feature type="region of interest" description="Disordered" evidence="2">
    <location>
        <begin position="42"/>
        <end position="85"/>
    </location>
</feature>
<feature type="region of interest" description="Disordered" evidence="2">
    <location>
        <begin position="137"/>
        <end position="158"/>
    </location>
</feature>
<gene>
    <name type="primary">MED7</name>
    <name type="ordered locus">CAALFM_C302440CA</name>
    <name type="ORF">CaO19.232</name>
    <name type="ORF">CaO19.7862</name>
</gene>
<evidence type="ECO:0000250" key="1"/>
<evidence type="ECO:0000256" key="2">
    <source>
        <dbReference type="SAM" id="MobiDB-lite"/>
    </source>
</evidence>
<evidence type="ECO:0000305" key="3"/>
<organism>
    <name type="scientific">Candida albicans (strain SC5314 / ATCC MYA-2876)</name>
    <name type="common">Yeast</name>
    <dbReference type="NCBI Taxonomy" id="237561"/>
    <lineage>
        <taxon>Eukaryota</taxon>
        <taxon>Fungi</taxon>
        <taxon>Dikarya</taxon>
        <taxon>Ascomycota</taxon>
        <taxon>Saccharomycotina</taxon>
        <taxon>Pichiomycetes</taxon>
        <taxon>Debaryomycetaceae</taxon>
        <taxon>Candida/Lodderomyces clade</taxon>
        <taxon>Candida</taxon>
    </lineage>
</organism>
<comment type="function">
    <text evidence="1">Component of the Mediator complex, a coactivator involved in the regulated transcription of nearly all RNA polymerase II-dependent genes. Mediator functions as a bridge to convey information from gene-specific regulatory proteins to the basal RNA polymerase II transcription machinery. Mediator is recruited to promoters by direct interactions with regulatory proteins and serves as a scaffold for the assembly of a functional preinitiation complex with RNA polymerase II and the general transcription factors (By similarity).</text>
</comment>
<comment type="subunit">
    <text evidence="1">Component of the Mediator complex.</text>
</comment>
<comment type="subcellular location">
    <subcellularLocation>
        <location evidence="1">Nucleus</location>
    </subcellularLocation>
</comment>
<comment type="similarity">
    <text evidence="3">Belongs to the Mediator complex subunit 7 family.</text>
</comment>